<accession>Q6PJG9</accession>
<accession>Q4VBZ3</accession>
<accession>Q59GV4</accession>
<accession>Q8N644</accession>
<accession>Q9BWJ0</accession>
<protein>
    <recommendedName>
        <fullName>Leucine-rich repeat and fibronectin type-III domain-containing protein 4</fullName>
    </recommendedName>
</protein>
<proteinExistence type="evidence at protein level"/>
<gene>
    <name type="primary">LRFN4</name>
    <name type="synonym">SALM3</name>
</gene>
<reference key="1">
    <citation type="journal article" date="2004" name="Genome Res.">
        <title>The status, quality, and expansion of the NIH full-length cDNA project: the Mammalian Gene Collection (MGC).</title>
        <authorList>
            <consortium name="The MGC Project Team"/>
        </authorList>
    </citation>
    <scope>NUCLEOTIDE SEQUENCE [LARGE SCALE MRNA]</scope>
    <scope>VARIANT ALA-340</scope>
    <source>
        <tissue>Eye</tissue>
        <tissue>Lung</tissue>
        <tissue>Prostate</tissue>
    </source>
</reference>
<reference key="2">
    <citation type="submission" date="2005-03" db="EMBL/GenBank/DDBJ databases">
        <title>Homo sapiens protein coding cDNA.</title>
        <authorList>
            <person name="Totoki Y."/>
            <person name="Toyoda A."/>
            <person name="Takeda T."/>
            <person name="Sakaki Y."/>
            <person name="Tanaka A."/>
            <person name="Yokoyama S."/>
            <person name="Ohara O."/>
            <person name="Nagase T."/>
            <person name="Kikuno R.F."/>
        </authorList>
    </citation>
    <scope>NUCLEOTIDE SEQUENCE [LARGE SCALE MRNA] OF 14-635</scope>
    <scope>VARIANT ALA-340</scope>
    <source>
        <tissue>Brain</tissue>
    </source>
</reference>
<reference key="3">
    <citation type="journal article" date="2006" name="Neuron">
        <title>SALM synaptic cell adhesion-like molecules regulate the differentiation of excitatory synapses.</title>
        <authorList>
            <person name="Ko J."/>
            <person name="Kim S."/>
            <person name="Chung H.S."/>
            <person name="Kim K."/>
            <person name="Han K."/>
            <person name="Kim H."/>
            <person name="Jun H."/>
            <person name="Kaang B.-K."/>
            <person name="Kim E."/>
        </authorList>
    </citation>
    <scope>INTERACTION WITH DLG1; DLG2; DLG3 AND DLG4</scope>
    <scope>MUTAGENESIS OF 633-SER--VAL-635</scope>
</reference>
<reference key="4">
    <citation type="journal article" date="2008" name="Proc. Natl. Acad. Sci. U.S.A.">
        <title>A quantitative atlas of mitotic phosphorylation.</title>
        <authorList>
            <person name="Dephoure N."/>
            <person name="Zhou C."/>
            <person name="Villen J."/>
            <person name="Beausoleil S.A."/>
            <person name="Bakalarski C.E."/>
            <person name="Elledge S.J."/>
            <person name="Gygi S.P."/>
        </authorList>
    </citation>
    <scope>PHOSPHORYLATION [LARGE SCALE ANALYSIS] AT SER-626</scope>
    <scope>IDENTIFICATION BY MASS SPECTROMETRY [LARGE SCALE ANALYSIS]</scope>
    <source>
        <tissue>Cervix carcinoma</tissue>
    </source>
</reference>
<reference key="5">
    <citation type="journal article" date="2010" name="Sci. Signal.">
        <title>Quantitative phosphoproteomics reveals widespread full phosphorylation site occupancy during mitosis.</title>
        <authorList>
            <person name="Olsen J.V."/>
            <person name="Vermeulen M."/>
            <person name="Santamaria A."/>
            <person name="Kumar C."/>
            <person name="Miller M.L."/>
            <person name="Jensen L.J."/>
            <person name="Gnad F."/>
            <person name="Cox J."/>
            <person name="Jensen T.S."/>
            <person name="Nigg E.A."/>
            <person name="Brunak S."/>
            <person name="Mann M."/>
        </authorList>
    </citation>
    <scope>IDENTIFICATION BY MASS SPECTROMETRY [LARGE SCALE ANALYSIS]</scope>
    <source>
        <tissue>Cervix carcinoma</tissue>
    </source>
</reference>
<reference key="6">
    <citation type="journal article" date="2013" name="J. Proteome Res.">
        <title>Toward a comprehensive characterization of a human cancer cell phosphoproteome.</title>
        <authorList>
            <person name="Zhou H."/>
            <person name="Di Palma S."/>
            <person name="Preisinger C."/>
            <person name="Peng M."/>
            <person name="Polat A.N."/>
            <person name="Heck A.J."/>
            <person name="Mohammed S."/>
        </authorList>
    </citation>
    <scope>PHOSPHORYLATION [LARGE SCALE ANALYSIS] AT SER-585 AND SER-626</scope>
    <scope>IDENTIFICATION BY MASS SPECTROMETRY [LARGE SCALE ANALYSIS]</scope>
    <source>
        <tissue>Cervix carcinoma</tissue>
        <tissue>Erythroleukemia</tissue>
    </source>
</reference>
<organism>
    <name type="scientific">Homo sapiens</name>
    <name type="common">Human</name>
    <dbReference type="NCBI Taxonomy" id="9606"/>
    <lineage>
        <taxon>Eukaryota</taxon>
        <taxon>Metazoa</taxon>
        <taxon>Chordata</taxon>
        <taxon>Craniata</taxon>
        <taxon>Vertebrata</taxon>
        <taxon>Euteleostomi</taxon>
        <taxon>Mammalia</taxon>
        <taxon>Eutheria</taxon>
        <taxon>Euarchontoglires</taxon>
        <taxon>Primates</taxon>
        <taxon>Haplorrhini</taxon>
        <taxon>Catarrhini</taxon>
        <taxon>Hominidae</taxon>
        <taxon>Homo</taxon>
    </lineage>
</organism>
<name>LRFN4_HUMAN</name>
<evidence type="ECO:0000250" key="1"/>
<evidence type="ECO:0000255" key="2"/>
<evidence type="ECO:0000255" key="3">
    <source>
        <dbReference type="PROSITE-ProRule" id="PRU00114"/>
    </source>
</evidence>
<evidence type="ECO:0000255" key="4">
    <source>
        <dbReference type="PROSITE-ProRule" id="PRU00316"/>
    </source>
</evidence>
<evidence type="ECO:0000256" key="5">
    <source>
        <dbReference type="SAM" id="MobiDB-lite"/>
    </source>
</evidence>
<evidence type="ECO:0000269" key="6">
    <source>
    </source>
</evidence>
<evidence type="ECO:0000269" key="7">
    <source>
    </source>
</evidence>
<evidence type="ECO:0000269" key="8">
    <source ref="2"/>
</evidence>
<evidence type="ECO:0000305" key="9"/>
<evidence type="ECO:0007744" key="10">
    <source>
    </source>
</evidence>
<evidence type="ECO:0007744" key="11">
    <source>
    </source>
</evidence>
<keyword id="KW-1015">Disulfide bond</keyword>
<keyword id="KW-0325">Glycoprotein</keyword>
<keyword id="KW-0393">Immunoglobulin domain</keyword>
<keyword id="KW-0433">Leucine-rich repeat</keyword>
<keyword id="KW-0472">Membrane</keyword>
<keyword id="KW-0597">Phosphoprotein</keyword>
<keyword id="KW-1267">Proteomics identification</keyword>
<keyword id="KW-1185">Reference proteome</keyword>
<keyword id="KW-0677">Repeat</keyword>
<keyword id="KW-0732">Signal</keyword>
<keyword id="KW-0812">Transmembrane</keyword>
<keyword id="KW-1133">Transmembrane helix</keyword>
<dbReference type="EMBL" id="BC000207">
    <property type="protein sequence ID" value="AAH00207.2"/>
    <property type="molecule type" value="mRNA"/>
</dbReference>
<dbReference type="EMBL" id="BC015581">
    <property type="protein sequence ID" value="AAH15581.2"/>
    <property type="molecule type" value="mRNA"/>
</dbReference>
<dbReference type="EMBL" id="BC027475">
    <property type="protein sequence ID" value="AAH27475.2"/>
    <property type="molecule type" value="mRNA"/>
</dbReference>
<dbReference type="EMBL" id="BC094813">
    <property type="protein sequence ID" value="AAH94813.1"/>
    <property type="molecule type" value="mRNA"/>
</dbReference>
<dbReference type="EMBL" id="AB209005">
    <property type="protein sequence ID" value="BAD92242.1"/>
    <property type="molecule type" value="mRNA"/>
</dbReference>
<dbReference type="CCDS" id="CCDS8153.1"/>
<dbReference type="RefSeq" id="NP_001350453.1">
    <property type="nucleotide sequence ID" value="NM_001363524.2"/>
</dbReference>
<dbReference type="RefSeq" id="NP_076941.2">
    <property type="nucleotide sequence ID" value="NM_024036.4"/>
</dbReference>
<dbReference type="RefSeq" id="XP_005274296.1">
    <property type="nucleotide sequence ID" value="XM_005274239.3"/>
</dbReference>
<dbReference type="SMR" id="Q6PJG9"/>
<dbReference type="BioGRID" id="122470">
    <property type="interactions" value="103"/>
</dbReference>
<dbReference type="FunCoup" id="Q6PJG9">
    <property type="interactions" value="228"/>
</dbReference>
<dbReference type="IntAct" id="Q6PJG9">
    <property type="interactions" value="77"/>
</dbReference>
<dbReference type="MINT" id="Q6PJG9"/>
<dbReference type="STRING" id="9606.ENSP00000312535"/>
<dbReference type="GlyCosmos" id="Q6PJG9">
    <property type="glycosylation" value="6 sites, No reported glycans"/>
</dbReference>
<dbReference type="GlyGen" id="Q6PJG9">
    <property type="glycosylation" value="7 sites, 2 N-linked glycans (2 sites)"/>
</dbReference>
<dbReference type="iPTMnet" id="Q6PJG9"/>
<dbReference type="PhosphoSitePlus" id="Q6PJG9"/>
<dbReference type="BioMuta" id="LRFN4"/>
<dbReference type="DMDM" id="62286924"/>
<dbReference type="jPOST" id="Q6PJG9"/>
<dbReference type="MassIVE" id="Q6PJG9"/>
<dbReference type="PaxDb" id="9606-ENSP00000312535"/>
<dbReference type="PeptideAtlas" id="Q6PJG9"/>
<dbReference type="ProteomicsDB" id="67206"/>
<dbReference type="Pumba" id="Q6PJG9"/>
<dbReference type="Antibodypedia" id="30278">
    <property type="antibodies" value="51 antibodies from 22 providers"/>
</dbReference>
<dbReference type="DNASU" id="78999"/>
<dbReference type="Ensembl" id="ENST00000309602.5">
    <property type="protein sequence ID" value="ENSP00000312535.4"/>
    <property type="gene ID" value="ENSG00000173621.9"/>
</dbReference>
<dbReference type="GeneID" id="78999"/>
<dbReference type="KEGG" id="hsa:78999"/>
<dbReference type="MANE-Select" id="ENST00000309602.5">
    <property type="protein sequence ID" value="ENSP00000312535.4"/>
    <property type="RefSeq nucleotide sequence ID" value="NM_024036.5"/>
    <property type="RefSeq protein sequence ID" value="NP_076941.2"/>
</dbReference>
<dbReference type="UCSC" id="uc001ojr.4">
    <property type="organism name" value="human"/>
</dbReference>
<dbReference type="AGR" id="HGNC:28456"/>
<dbReference type="CTD" id="78999"/>
<dbReference type="DisGeNET" id="78999"/>
<dbReference type="GeneCards" id="LRFN4"/>
<dbReference type="HGNC" id="HGNC:28456">
    <property type="gene designation" value="LRFN4"/>
</dbReference>
<dbReference type="HPA" id="ENSG00000173621">
    <property type="expression patterns" value="Tissue enhanced (brain)"/>
</dbReference>
<dbReference type="MalaCards" id="LRFN4"/>
<dbReference type="MIM" id="612810">
    <property type="type" value="gene"/>
</dbReference>
<dbReference type="neXtProt" id="NX_Q6PJG9"/>
<dbReference type="OpenTargets" id="ENSG00000173621"/>
<dbReference type="PharmGKB" id="PA134922153"/>
<dbReference type="VEuPathDB" id="HostDB:ENSG00000173621"/>
<dbReference type="eggNOG" id="KOG0619">
    <property type="taxonomic scope" value="Eukaryota"/>
</dbReference>
<dbReference type="GeneTree" id="ENSGT00940000162195"/>
<dbReference type="InParanoid" id="Q6PJG9"/>
<dbReference type="OMA" id="NCTVDDT"/>
<dbReference type="OrthoDB" id="676979at2759"/>
<dbReference type="PAN-GO" id="Q6PJG9">
    <property type="GO annotations" value="6 GO annotations based on evolutionary models"/>
</dbReference>
<dbReference type="PhylomeDB" id="Q6PJG9"/>
<dbReference type="TreeFam" id="TF350185"/>
<dbReference type="PathwayCommons" id="Q6PJG9"/>
<dbReference type="Reactome" id="R-HSA-8849932">
    <property type="pathway name" value="Synaptic adhesion-like molecules"/>
</dbReference>
<dbReference type="SignaLink" id="Q6PJG9"/>
<dbReference type="SIGNOR" id="Q6PJG9"/>
<dbReference type="BioGRID-ORCS" id="78999">
    <property type="hits" value="14 hits in 1156 CRISPR screens"/>
</dbReference>
<dbReference type="GenomeRNAi" id="78999"/>
<dbReference type="Pharos" id="Q6PJG9">
    <property type="development level" value="Tbio"/>
</dbReference>
<dbReference type="PRO" id="PR:Q6PJG9"/>
<dbReference type="Proteomes" id="UP000005640">
    <property type="component" value="Chromosome 11"/>
</dbReference>
<dbReference type="RNAct" id="Q6PJG9">
    <property type="molecule type" value="protein"/>
</dbReference>
<dbReference type="Bgee" id="ENSG00000173621">
    <property type="expression patterns" value="Expressed in ganglionic eminence and 139 other cell types or tissues"/>
</dbReference>
<dbReference type="ExpressionAtlas" id="Q6PJG9">
    <property type="expression patterns" value="baseline and differential"/>
</dbReference>
<dbReference type="GO" id="GO:0009986">
    <property type="term" value="C:cell surface"/>
    <property type="evidence" value="ECO:0000318"/>
    <property type="project" value="GO_Central"/>
</dbReference>
<dbReference type="GO" id="GO:0098982">
    <property type="term" value="C:GABA-ergic synapse"/>
    <property type="evidence" value="ECO:0007669"/>
    <property type="project" value="Ensembl"/>
</dbReference>
<dbReference type="GO" id="GO:0098978">
    <property type="term" value="C:glutamatergic synapse"/>
    <property type="evidence" value="ECO:0000318"/>
    <property type="project" value="GO_Central"/>
</dbReference>
<dbReference type="GO" id="GO:0005886">
    <property type="term" value="C:plasma membrane"/>
    <property type="evidence" value="ECO:0000304"/>
    <property type="project" value="Reactome"/>
</dbReference>
<dbReference type="GO" id="GO:0098839">
    <property type="term" value="C:postsynaptic density membrane"/>
    <property type="evidence" value="ECO:0000318"/>
    <property type="project" value="GO_Central"/>
</dbReference>
<dbReference type="GO" id="GO:0099151">
    <property type="term" value="P:regulation of postsynaptic density assembly"/>
    <property type="evidence" value="ECO:0000318"/>
    <property type="project" value="GO_Central"/>
</dbReference>
<dbReference type="GO" id="GO:1905606">
    <property type="term" value="P:regulation of presynapse assembly"/>
    <property type="evidence" value="ECO:0000318"/>
    <property type="project" value="GO_Central"/>
</dbReference>
<dbReference type="GO" id="GO:0099560">
    <property type="term" value="P:synaptic membrane adhesion"/>
    <property type="evidence" value="ECO:0000318"/>
    <property type="project" value="GO_Central"/>
</dbReference>
<dbReference type="FunFam" id="3.80.10.10:FF:000025">
    <property type="entry name" value="Leucine rich repeat and fibronectin type III domain containing 5"/>
    <property type="match status" value="1"/>
</dbReference>
<dbReference type="FunFam" id="3.80.10.10:FF:000045">
    <property type="entry name" value="Leucine-rich repeat and fibronectin type III domain-containing 2"/>
    <property type="match status" value="1"/>
</dbReference>
<dbReference type="FunFam" id="2.60.40.10:FF:000091">
    <property type="entry name" value="Leucine-rich repeat and fibronectin type III domain-containing protein 1"/>
    <property type="match status" value="1"/>
</dbReference>
<dbReference type="FunFam" id="2.60.40.10:FF:001081">
    <property type="entry name" value="Leucine-rich repeat and fibronectin type-III domain-containing protein 4"/>
    <property type="match status" value="1"/>
</dbReference>
<dbReference type="Gene3D" id="2.60.40.10">
    <property type="entry name" value="Immunoglobulins"/>
    <property type="match status" value="2"/>
</dbReference>
<dbReference type="Gene3D" id="3.80.10.10">
    <property type="entry name" value="Ribonuclease Inhibitor"/>
    <property type="match status" value="2"/>
</dbReference>
<dbReference type="InterPro" id="IPR000483">
    <property type="entry name" value="Cys-rich_flank_reg_C"/>
</dbReference>
<dbReference type="InterPro" id="IPR003961">
    <property type="entry name" value="FN3_dom"/>
</dbReference>
<dbReference type="InterPro" id="IPR036116">
    <property type="entry name" value="FN3_sf"/>
</dbReference>
<dbReference type="InterPro" id="IPR007110">
    <property type="entry name" value="Ig-like_dom"/>
</dbReference>
<dbReference type="InterPro" id="IPR036179">
    <property type="entry name" value="Ig-like_dom_sf"/>
</dbReference>
<dbReference type="InterPro" id="IPR013783">
    <property type="entry name" value="Ig-like_fold"/>
</dbReference>
<dbReference type="InterPro" id="IPR013098">
    <property type="entry name" value="Ig_I-set"/>
</dbReference>
<dbReference type="InterPro" id="IPR003599">
    <property type="entry name" value="Ig_sub"/>
</dbReference>
<dbReference type="InterPro" id="IPR003598">
    <property type="entry name" value="Ig_sub2"/>
</dbReference>
<dbReference type="InterPro" id="IPR001611">
    <property type="entry name" value="Leu-rich_rpt"/>
</dbReference>
<dbReference type="InterPro" id="IPR003591">
    <property type="entry name" value="Leu-rich_rpt_typical-subtyp"/>
</dbReference>
<dbReference type="InterPro" id="IPR050467">
    <property type="entry name" value="LRFN"/>
</dbReference>
<dbReference type="InterPro" id="IPR032675">
    <property type="entry name" value="LRR_dom_sf"/>
</dbReference>
<dbReference type="PANTHER" id="PTHR45842:SF3">
    <property type="entry name" value="LEUCINE-RICH REPEAT AND FIBRONECTIN TYPE-III DOMAIN-CONTAINING PROTEIN 4"/>
    <property type="match status" value="1"/>
</dbReference>
<dbReference type="PANTHER" id="PTHR45842">
    <property type="entry name" value="SYNAPTIC ADHESION-LIKE MOLECULE SALM"/>
    <property type="match status" value="1"/>
</dbReference>
<dbReference type="Pfam" id="PF00041">
    <property type="entry name" value="fn3"/>
    <property type="match status" value="1"/>
</dbReference>
<dbReference type="Pfam" id="PF07679">
    <property type="entry name" value="I-set"/>
    <property type="match status" value="1"/>
</dbReference>
<dbReference type="Pfam" id="PF00560">
    <property type="entry name" value="LRR_1"/>
    <property type="match status" value="1"/>
</dbReference>
<dbReference type="Pfam" id="PF13855">
    <property type="entry name" value="LRR_8"/>
    <property type="match status" value="2"/>
</dbReference>
<dbReference type="SMART" id="SM00060">
    <property type="entry name" value="FN3"/>
    <property type="match status" value="1"/>
</dbReference>
<dbReference type="SMART" id="SM00409">
    <property type="entry name" value="IG"/>
    <property type="match status" value="1"/>
</dbReference>
<dbReference type="SMART" id="SM00408">
    <property type="entry name" value="IGc2"/>
    <property type="match status" value="1"/>
</dbReference>
<dbReference type="SMART" id="SM00369">
    <property type="entry name" value="LRR_TYP"/>
    <property type="match status" value="6"/>
</dbReference>
<dbReference type="SMART" id="SM00082">
    <property type="entry name" value="LRRCT"/>
    <property type="match status" value="1"/>
</dbReference>
<dbReference type="SUPFAM" id="SSF49265">
    <property type="entry name" value="Fibronectin type III"/>
    <property type="match status" value="1"/>
</dbReference>
<dbReference type="SUPFAM" id="SSF48726">
    <property type="entry name" value="Immunoglobulin"/>
    <property type="match status" value="1"/>
</dbReference>
<dbReference type="SUPFAM" id="SSF52058">
    <property type="entry name" value="L domain-like"/>
    <property type="match status" value="1"/>
</dbReference>
<dbReference type="PROSITE" id="PS50853">
    <property type="entry name" value="FN3"/>
    <property type="match status" value="1"/>
</dbReference>
<dbReference type="PROSITE" id="PS50835">
    <property type="entry name" value="IG_LIKE"/>
    <property type="match status" value="1"/>
</dbReference>
<sequence length="635" mass="66860">MAPPLLLLLLASGAAACPLPCVCQNLSESLSTLCAHRGLLFVPPNVDRRTVELRLADNFIQALGPPDFRNMTGLVDLTLSRNAITRIGARAFGDLESLRSLHLDGNRLVELGTGSLRGPVNLQHLILSGNQLGRIAPGAFDDFLESLEDLDLSYNNLRQVPWAGIGAMPALHTLNLDHNLIDALPPGAFAQLGQLSRLDLTSNRLATLAPDPLFSRGRDAEASPAPLVLSFSGNPLHCNCELLWLRRLARPDDLETCASPPGLAGRYFWAVPEGEFSCEPPLIARHTQRLWVLEGQRATLRCRALGDPAPTMHWVGPDDRLVGNSSRARAFPNGTLEIGVTGAGDAGGYTCIATNPAGEATARVELRVLALPHGGNSSAEGGRPGPSDIAASARTAAEGEGTLESEPAVQVTEVTATSGLVSWGPGRPADPVWMFQIQYNSSEDETLIYRIVPASSHHFLLKHLVPGADYDLCLLALSPAAGPSDLTATRLLGCAHFSTLPASPLCHALQAHVLGGTLTVAVGGVLVAALLVFTVALLVRGRGAGNGRLPLKLSHVQSQTNGGPSPTPKAHPPRSPPPRPQRSCSLDLGDAGCYGYARRLGGAWARRSHSVHGGLLGAGCRGVGGSAERLEESVV</sequence>
<comment type="function">
    <text evidence="1">Promotes neurite outgrowth in hippocampal neurons. May play a role in redistributing DLG4 to the cell periphery (By similarity).</text>
</comment>
<comment type="subunit">
    <text evidence="1 7">Can form heteromeric complexes with LRFN1, LRFN2, LRFN3 and LRFN5. Unable to form homophilic interactions across cell junctions (By similarity). Interacts with DLG1, DLG2, DLG3 and DLG4.</text>
</comment>
<comment type="interaction">
    <interactant intactId="EBI-7910762">
        <id>Q6PJG9</id>
    </interactant>
    <interactant intactId="EBI-10173507">
        <id>Q6UY14-3</id>
        <label>ADAMTSL4</label>
    </interactant>
    <organismsDiffer>false</organismsDiffer>
    <experiments>3</experiments>
</comment>
<comment type="interaction">
    <interactant intactId="EBI-7910762">
        <id>Q6PJG9</id>
    </interactant>
    <interactant intactId="EBI-3867333">
        <id>A8MQ03</id>
        <label>CYSRT1</label>
    </interactant>
    <organismsDiffer>false</organismsDiffer>
    <experiments>3</experiments>
</comment>
<comment type="interaction">
    <interactant intactId="EBI-7910762">
        <id>Q6PJG9</id>
    </interactant>
    <interactant intactId="EBI-11959885">
        <id>Q07627</id>
        <label>KRTAP1-1</label>
    </interactant>
    <organismsDiffer>false</organismsDiffer>
    <experiments>3</experiments>
</comment>
<comment type="interaction">
    <interactant intactId="EBI-7910762">
        <id>Q6PJG9</id>
    </interactant>
    <interactant intactId="EBI-11749135">
        <id>Q8IUG1</id>
        <label>KRTAP1-3</label>
    </interactant>
    <organismsDiffer>false</organismsDiffer>
    <experiments>3</experiments>
</comment>
<comment type="interaction">
    <interactant intactId="EBI-7910762">
        <id>Q6PJG9</id>
    </interactant>
    <interactant intactId="EBI-10171774">
        <id>P60410</id>
        <label>KRTAP10-8</label>
    </interactant>
    <organismsDiffer>false</organismsDiffer>
    <experiments>3</experiments>
</comment>
<comment type="interaction">
    <interactant intactId="EBI-7910762">
        <id>Q6PJG9</id>
    </interactant>
    <interactant intactId="EBI-11962084">
        <id>Q3LI66</id>
        <label>KRTAP6-2</label>
    </interactant>
    <organismsDiffer>false</organismsDiffer>
    <experiments>3</experiments>
</comment>
<comment type="interaction">
    <interactant intactId="EBI-7910762">
        <id>Q6PJG9</id>
    </interactant>
    <interactant intactId="EBI-945833">
        <id>Q7Z3S9</id>
        <label>NOTCH2NLA</label>
    </interactant>
    <organismsDiffer>false</organismsDiffer>
    <experiments>3</experiments>
</comment>
<comment type="interaction">
    <interactant intactId="EBI-7910762">
        <id>Q6PJG9</id>
    </interactant>
    <interactant intactId="EBI-22310682">
        <id>P0DPK4</id>
        <label>NOTCH2NLC</label>
    </interactant>
    <organismsDiffer>false</organismsDiffer>
    <experiments>3</experiments>
</comment>
<comment type="interaction">
    <interactant intactId="EBI-7910762">
        <id>Q6PJG9</id>
    </interactant>
    <interactant intactId="EBI-395883">
        <id>P07237</id>
        <label>P4HB</label>
    </interactant>
    <organismsDiffer>false</organismsDiffer>
    <experiments>3</experiments>
</comment>
<comment type="subcellular location">
    <subcellularLocation>
        <location evidence="1">Membrane</location>
        <topology evidence="1">Single-pass type I membrane protein</topology>
    </subcellularLocation>
</comment>
<comment type="domain">
    <text evidence="1">The PDZ-binding motif is required for neurite outgrowth promotion (By similarity). This motif is also involved in DLG1-, DLG3- and DLG4-binding.</text>
</comment>
<comment type="PTM">
    <text evidence="1">Glycosylated.</text>
</comment>
<comment type="similarity">
    <text evidence="9">Belongs to the LRFN family.</text>
</comment>
<feature type="signal peptide" evidence="2">
    <location>
        <begin position="1"/>
        <end position="16"/>
    </location>
</feature>
<feature type="chain" id="PRO_0000014843" description="Leucine-rich repeat and fibronectin type-III domain-containing protein 4">
    <location>
        <begin position="17"/>
        <end position="635"/>
    </location>
</feature>
<feature type="topological domain" description="Extracellular" evidence="2">
    <location>
        <begin position="17"/>
        <end position="518"/>
    </location>
</feature>
<feature type="transmembrane region" description="Helical" evidence="2">
    <location>
        <begin position="519"/>
        <end position="539"/>
    </location>
</feature>
<feature type="topological domain" description="Cytoplasmic" evidence="2">
    <location>
        <begin position="540"/>
        <end position="635"/>
    </location>
</feature>
<feature type="domain" description="LRRNT">
    <location>
        <begin position="17"/>
        <end position="48"/>
    </location>
</feature>
<feature type="repeat" description="LRR 1">
    <location>
        <begin position="49"/>
        <end position="70"/>
    </location>
</feature>
<feature type="repeat" description="LRR 2">
    <location>
        <begin position="73"/>
        <end position="94"/>
    </location>
</feature>
<feature type="repeat" description="LRR 3">
    <location>
        <begin position="97"/>
        <end position="118"/>
    </location>
</feature>
<feature type="repeat" description="LRR 4">
    <location>
        <begin position="121"/>
        <end position="142"/>
    </location>
</feature>
<feature type="repeat" description="LRR 5">
    <location>
        <begin position="146"/>
        <end position="161"/>
    </location>
</feature>
<feature type="repeat" description="LRR 6">
    <location>
        <begin position="170"/>
        <end position="191"/>
    </location>
</feature>
<feature type="repeat" description="LRR 7">
    <location>
        <begin position="194"/>
        <end position="215"/>
    </location>
</feature>
<feature type="domain" description="LRRCT">
    <location>
        <begin position="234"/>
        <end position="280"/>
    </location>
</feature>
<feature type="domain" description="Ig-like">
    <location>
        <begin position="281"/>
        <end position="367"/>
    </location>
</feature>
<feature type="domain" description="Fibronectin type-III" evidence="4">
    <location>
        <begin position="405"/>
        <end position="502"/>
    </location>
</feature>
<feature type="region of interest" description="Disordered" evidence="5">
    <location>
        <begin position="373"/>
        <end position="410"/>
    </location>
</feature>
<feature type="region of interest" description="Disordered" evidence="5">
    <location>
        <begin position="555"/>
        <end position="583"/>
    </location>
</feature>
<feature type="short sequence motif" description="PDZ-binding">
    <location>
        <begin position="632"/>
        <end position="635"/>
    </location>
</feature>
<feature type="compositionally biased region" description="Pro residues" evidence="5">
    <location>
        <begin position="565"/>
        <end position="580"/>
    </location>
</feature>
<feature type="modified residue" description="Phosphoserine" evidence="11">
    <location>
        <position position="585"/>
    </location>
</feature>
<feature type="modified residue" description="Phosphoserine" evidence="10 11">
    <location>
        <position position="626"/>
    </location>
</feature>
<feature type="glycosylation site" description="N-linked (GlcNAc...) asparagine" evidence="2">
    <location>
        <position position="25"/>
    </location>
</feature>
<feature type="glycosylation site" description="N-linked (GlcNAc...) asparagine" evidence="2">
    <location>
        <position position="70"/>
    </location>
</feature>
<feature type="glycosylation site" description="N-linked (GlcNAc...) asparagine" evidence="2">
    <location>
        <position position="324"/>
    </location>
</feature>
<feature type="glycosylation site" description="N-linked (GlcNAc...) asparagine" evidence="2">
    <location>
        <position position="333"/>
    </location>
</feature>
<feature type="glycosylation site" description="N-linked (GlcNAc...) asparagine" evidence="2">
    <location>
        <position position="376"/>
    </location>
</feature>
<feature type="glycosylation site" description="N-linked (GlcNAc...) asparagine" evidence="2">
    <location>
        <position position="440"/>
    </location>
</feature>
<feature type="disulfide bond" evidence="3">
    <location>
        <begin position="302"/>
        <end position="351"/>
    </location>
</feature>
<feature type="sequence variant" id="VAR_024499" description="In dbSNP:rs3741194." evidence="6 8">
    <original>V</original>
    <variation>A</variation>
    <location>
        <position position="340"/>
    </location>
</feature>
<feature type="mutagenesis site" description="Loss of DLG1-, DLG3- and DLG4-binding." evidence="7">
    <location>
        <begin position="633"/>
        <end position="635"/>
    </location>
</feature>